<comment type="function">
    <text evidence="1">Component of the acetyl coenzyme A carboxylase (ACC) complex. Biotin carboxylase (BC) catalyzes the carboxylation of biotin on its carrier protein (BCCP) and then the CO(2) group is transferred by the transcarboxylase to acetyl-CoA to form malonyl-CoA.</text>
</comment>
<comment type="catalytic activity">
    <reaction evidence="1">
        <text>N(6)-carboxybiotinyl-L-lysyl-[protein] + acetyl-CoA = N(6)-biotinyl-L-lysyl-[protein] + malonyl-CoA</text>
        <dbReference type="Rhea" id="RHEA:54728"/>
        <dbReference type="Rhea" id="RHEA-COMP:10505"/>
        <dbReference type="Rhea" id="RHEA-COMP:10506"/>
        <dbReference type="ChEBI" id="CHEBI:57288"/>
        <dbReference type="ChEBI" id="CHEBI:57384"/>
        <dbReference type="ChEBI" id="CHEBI:83144"/>
        <dbReference type="ChEBI" id="CHEBI:83145"/>
        <dbReference type="EC" id="2.1.3.15"/>
    </reaction>
</comment>
<comment type="cofactor">
    <cofactor evidence="1">
        <name>Zn(2+)</name>
        <dbReference type="ChEBI" id="CHEBI:29105"/>
    </cofactor>
    <text evidence="1">Binds 1 zinc ion per subunit.</text>
</comment>
<comment type="pathway">
    <text evidence="1">Lipid metabolism; malonyl-CoA biosynthesis; malonyl-CoA from acetyl-CoA: step 1/1.</text>
</comment>
<comment type="subunit">
    <text evidence="1">Acetyl-CoA carboxylase is a heterohexamer composed of biotin carboxyl carrier protein (AccB), biotin carboxylase (AccC) and two subunits each of ACCase subunit alpha (AccA) and ACCase subunit beta (AccD).</text>
</comment>
<comment type="subcellular location">
    <subcellularLocation>
        <location evidence="1">Cytoplasm</location>
    </subcellularLocation>
</comment>
<comment type="similarity">
    <text evidence="1">Belongs to the AccD/PCCB family.</text>
</comment>
<evidence type="ECO:0000255" key="1">
    <source>
        <dbReference type="HAMAP-Rule" id="MF_01395"/>
    </source>
</evidence>
<evidence type="ECO:0000255" key="2">
    <source>
        <dbReference type="PROSITE-ProRule" id="PRU01136"/>
    </source>
</evidence>
<evidence type="ECO:0000256" key="3">
    <source>
        <dbReference type="SAM" id="MobiDB-lite"/>
    </source>
</evidence>
<proteinExistence type="inferred from homology"/>
<feature type="chain" id="PRO_0000359090" description="Acetyl-coenzyme A carboxylase carboxyl transferase subunit beta 1">
    <location>
        <begin position="1"/>
        <end position="308"/>
    </location>
</feature>
<feature type="domain" description="CoA carboxyltransferase N-terminal" evidence="2">
    <location>
        <begin position="25"/>
        <end position="294"/>
    </location>
</feature>
<feature type="zinc finger region" description="C4-type" evidence="1">
    <location>
        <begin position="29"/>
        <end position="51"/>
    </location>
</feature>
<feature type="region of interest" description="Disordered" evidence="3">
    <location>
        <begin position="288"/>
        <end position="308"/>
    </location>
</feature>
<feature type="binding site" evidence="1">
    <location>
        <position position="29"/>
    </location>
    <ligand>
        <name>Zn(2+)</name>
        <dbReference type="ChEBI" id="CHEBI:29105"/>
    </ligand>
</feature>
<feature type="binding site" evidence="1">
    <location>
        <position position="32"/>
    </location>
    <ligand>
        <name>Zn(2+)</name>
        <dbReference type="ChEBI" id="CHEBI:29105"/>
    </ligand>
</feature>
<feature type="binding site" evidence="1">
    <location>
        <position position="48"/>
    </location>
    <ligand>
        <name>Zn(2+)</name>
        <dbReference type="ChEBI" id="CHEBI:29105"/>
    </ligand>
</feature>
<feature type="binding site" evidence="1">
    <location>
        <position position="51"/>
    </location>
    <ligand>
        <name>Zn(2+)</name>
        <dbReference type="ChEBI" id="CHEBI:29105"/>
    </ligand>
</feature>
<protein>
    <recommendedName>
        <fullName evidence="1">Acetyl-coenzyme A carboxylase carboxyl transferase subunit beta 1</fullName>
        <shortName evidence="1">ACCase subunit beta 1</shortName>
        <shortName evidence="1">Acetyl-CoA carboxylase carboxyltransferase subunit beta 1</shortName>
        <ecNumber evidence="1">2.1.3.15</ecNumber>
    </recommendedName>
</protein>
<name>ACCD1_VIBPA</name>
<reference key="1">
    <citation type="journal article" date="2003" name="Lancet">
        <title>Genome sequence of Vibrio parahaemolyticus: a pathogenic mechanism distinct from that of V. cholerae.</title>
        <authorList>
            <person name="Makino K."/>
            <person name="Oshima K."/>
            <person name="Kurokawa K."/>
            <person name="Yokoyama K."/>
            <person name="Uda T."/>
            <person name="Tagomori K."/>
            <person name="Iijima Y."/>
            <person name="Najima M."/>
            <person name="Nakano M."/>
            <person name="Yamashita A."/>
            <person name="Kubota Y."/>
            <person name="Kimura S."/>
            <person name="Yasunaga T."/>
            <person name="Honda T."/>
            <person name="Shinagawa H."/>
            <person name="Hattori M."/>
            <person name="Iida T."/>
        </authorList>
    </citation>
    <scope>NUCLEOTIDE SEQUENCE [LARGE SCALE GENOMIC DNA]</scope>
    <source>
        <strain>RIMD 2210633</strain>
    </source>
</reference>
<keyword id="KW-0067">ATP-binding</keyword>
<keyword id="KW-0963">Cytoplasm</keyword>
<keyword id="KW-0275">Fatty acid biosynthesis</keyword>
<keyword id="KW-0276">Fatty acid metabolism</keyword>
<keyword id="KW-0444">Lipid biosynthesis</keyword>
<keyword id="KW-0443">Lipid metabolism</keyword>
<keyword id="KW-0479">Metal-binding</keyword>
<keyword id="KW-0547">Nucleotide-binding</keyword>
<keyword id="KW-0808">Transferase</keyword>
<keyword id="KW-0862">Zinc</keyword>
<keyword id="KW-0863">Zinc-finger</keyword>
<gene>
    <name evidence="1" type="primary">accD1</name>
    <name type="ordered locus">VP2189</name>
</gene>
<accession>Q87MP2</accession>
<sequence>MSWLEKILEKSNLVSSRKASIPEGVWTKCTSCEQVLYHAELERNLEVCPKCNHHMRMKARRRLETFLDEGNRVELGTELEPQDKLKFKDSKRYKERISAAQKSSGEKDALIVMQGELLGMPLVACAFEFSFMGGSMGSVVGARFVKAVEAAIENNCALVCFSASGGARMQEALMSLMQMAKTSAALERLSEKGLPFISVLTDPTMGGVSASLAMLGDINIGEPKALIGFAGRRVIEQTVREDLPEGFQRSEFLLEHGAIDMIVDRREMRQRVGGLIAKMTNHKSPLVVSVNESPNEEPYSVPEVDEKG</sequence>
<dbReference type="EC" id="2.1.3.15" evidence="1"/>
<dbReference type="EMBL" id="BA000031">
    <property type="protein sequence ID" value="BAC60452.1"/>
    <property type="molecule type" value="Genomic_DNA"/>
</dbReference>
<dbReference type="RefSeq" id="NP_798568.1">
    <property type="nucleotide sequence ID" value="NC_004603.1"/>
</dbReference>
<dbReference type="SMR" id="Q87MP2"/>
<dbReference type="GeneID" id="1189702"/>
<dbReference type="KEGG" id="vpa:VP2189"/>
<dbReference type="PATRIC" id="fig|223926.6.peg.2093"/>
<dbReference type="eggNOG" id="COG0777">
    <property type="taxonomic scope" value="Bacteria"/>
</dbReference>
<dbReference type="HOGENOM" id="CLU_015486_1_3_6"/>
<dbReference type="UniPathway" id="UPA00655">
    <property type="reaction ID" value="UER00711"/>
</dbReference>
<dbReference type="Proteomes" id="UP000002493">
    <property type="component" value="Chromosome 1"/>
</dbReference>
<dbReference type="GO" id="GO:0009329">
    <property type="term" value="C:acetate CoA-transferase complex"/>
    <property type="evidence" value="ECO:0007669"/>
    <property type="project" value="TreeGrafter"/>
</dbReference>
<dbReference type="GO" id="GO:0003989">
    <property type="term" value="F:acetyl-CoA carboxylase activity"/>
    <property type="evidence" value="ECO:0007669"/>
    <property type="project" value="InterPro"/>
</dbReference>
<dbReference type="GO" id="GO:0005524">
    <property type="term" value="F:ATP binding"/>
    <property type="evidence" value="ECO:0007669"/>
    <property type="project" value="UniProtKB-KW"/>
</dbReference>
<dbReference type="GO" id="GO:0016743">
    <property type="term" value="F:carboxyl- or carbamoyltransferase activity"/>
    <property type="evidence" value="ECO:0007669"/>
    <property type="project" value="UniProtKB-UniRule"/>
</dbReference>
<dbReference type="GO" id="GO:0008270">
    <property type="term" value="F:zinc ion binding"/>
    <property type="evidence" value="ECO:0007669"/>
    <property type="project" value="UniProtKB-UniRule"/>
</dbReference>
<dbReference type="GO" id="GO:0006633">
    <property type="term" value="P:fatty acid biosynthetic process"/>
    <property type="evidence" value="ECO:0007669"/>
    <property type="project" value="UniProtKB-KW"/>
</dbReference>
<dbReference type="GO" id="GO:2001295">
    <property type="term" value="P:malonyl-CoA biosynthetic process"/>
    <property type="evidence" value="ECO:0007669"/>
    <property type="project" value="UniProtKB-UniRule"/>
</dbReference>
<dbReference type="FunFam" id="3.90.226.10:FF:000013">
    <property type="entry name" value="Acetyl-coenzyme A carboxylase carboxyl transferase subunit beta"/>
    <property type="match status" value="1"/>
</dbReference>
<dbReference type="Gene3D" id="3.90.226.10">
    <property type="entry name" value="2-enoyl-CoA Hydratase, Chain A, domain 1"/>
    <property type="match status" value="1"/>
</dbReference>
<dbReference type="HAMAP" id="MF_01395">
    <property type="entry name" value="AcetylCoA_CT_beta"/>
    <property type="match status" value="1"/>
</dbReference>
<dbReference type="InterPro" id="IPR034733">
    <property type="entry name" value="AcCoA_carboxyl_beta"/>
</dbReference>
<dbReference type="InterPro" id="IPR000438">
    <property type="entry name" value="Acetyl_CoA_COase_Trfase_b_su"/>
</dbReference>
<dbReference type="InterPro" id="IPR029045">
    <property type="entry name" value="ClpP/crotonase-like_dom_sf"/>
</dbReference>
<dbReference type="InterPro" id="IPR011762">
    <property type="entry name" value="COA_CT_N"/>
</dbReference>
<dbReference type="InterPro" id="IPR041010">
    <property type="entry name" value="Znf-ACC"/>
</dbReference>
<dbReference type="NCBIfam" id="TIGR00515">
    <property type="entry name" value="accD"/>
    <property type="match status" value="1"/>
</dbReference>
<dbReference type="PANTHER" id="PTHR42995">
    <property type="entry name" value="ACETYL-COENZYME A CARBOXYLASE CARBOXYL TRANSFERASE SUBUNIT BETA, CHLOROPLASTIC"/>
    <property type="match status" value="1"/>
</dbReference>
<dbReference type="PANTHER" id="PTHR42995:SF5">
    <property type="entry name" value="ACETYL-COENZYME A CARBOXYLASE CARBOXYL TRANSFERASE SUBUNIT BETA, CHLOROPLASTIC"/>
    <property type="match status" value="1"/>
</dbReference>
<dbReference type="Pfam" id="PF01039">
    <property type="entry name" value="Carboxyl_trans"/>
    <property type="match status" value="1"/>
</dbReference>
<dbReference type="Pfam" id="PF17848">
    <property type="entry name" value="Zn_ribbon_ACC"/>
    <property type="match status" value="1"/>
</dbReference>
<dbReference type="PRINTS" id="PR01070">
    <property type="entry name" value="ACCCTRFRASEB"/>
</dbReference>
<dbReference type="SUPFAM" id="SSF52096">
    <property type="entry name" value="ClpP/crotonase"/>
    <property type="match status" value="1"/>
</dbReference>
<dbReference type="PROSITE" id="PS50980">
    <property type="entry name" value="COA_CT_NTER"/>
    <property type="match status" value="1"/>
</dbReference>
<organism>
    <name type="scientific">Vibrio parahaemolyticus serotype O3:K6 (strain RIMD 2210633)</name>
    <dbReference type="NCBI Taxonomy" id="223926"/>
    <lineage>
        <taxon>Bacteria</taxon>
        <taxon>Pseudomonadati</taxon>
        <taxon>Pseudomonadota</taxon>
        <taxon>Gammaproteobacteria</taxon>
        <taxon>Vibrionales</taxon>
        <taxon>Vibrionaceae</taxon>
        <taxon>Vibrio</taxon>
    </lineage>
</organism>